<accession>A1A6H3</accession>
<accession>Q9SHH5</accession>
<keyword id="KW-0002">3D-structure</keyword>
<keyword id="KW-0067">ATP-binding</keyword>
<keyword id="KW-0119">Carbohydrate metabolism</keyword>
<keyword id="KW-0150">Chloroplast</keyword>
<keyword id="KW-0418">Kinase</keyword>
<keyword id="KW-0460">Magnesium</keyword>
<keyword id="KW-0479">Metal-binding</keyword>
<keyword id="KW-0547">Nucleotide-binding</keyword>
<keyword id="KW-0934">Plastid</keyword>
<keyword id="KW-0630">Potassium</keyword>
<keyword id="KW-1185">Reference proteome</keyword>
<keyword id="KW-0808">Transferase</keyword>
<keyword id="KW-0809">Transit peptide</keyword>
<protein>
    <recommendedName>
        <fullName evidence="1">Ribokinase</fullName>
        <shortName evidence="3">AtRBSK</shortName>
        <shortName evidence="1">RK</shortName>
        <ecNumber evidence="1 2">2.7.1.15</ecNumber>
    </recommendedName>
</protein>
<reference key="1">
    <citation type="journal article" date="2000" name="Nature">
        <title>Sequence and analysis of chromosome 1 of the plant Arabidopsis thaliana.</title>
        <authorList>
            <person name="Theologis A."/>
            <person name="Ecker J.R."/>
            <person name="Palm C.J."/>
            <person name="Federspiel N.A."/>
            <person name="Kaul S."/>
            <person name="White O."/>
            <person name="Alonso J."/>
            <person name="Altafi H."/>
            <person name="Araujo R."/>
            <person name="Bowman C.L."/>
            <person name="Brooks S.Y."/>
            <person name="Buehler E."/>
            <person name="Chan A."/>
            <person name="Chao Q."/>
            <person name="Chen H."/>
            <person name="Cheuk R.F."/>
            <person name="Chin C.W."/>
            <person name="Chung M.K."/>
            <person name="Conn L."/>
            <person name="Conway A.B."/>
            <person name="Conway A.R."/>
            <person name="Creasy T.H."/>
            <person name="Dewar K."/>
            <person name="Dunn P."/>
            <person name="Etgu P."/>
            <person name="Feldblyum T.V."/>
            <person name="Feng J.-D."/>
            <person name="Fong B."/>
            <person name="Fujii C.Y."/>
            <person name="Gill J.E."/>
            <person name="Goldsmith A.D."/>
            <person name="Haas B."/>
            <person name="Hansen N.F."/>
            <person name="Hughes B."/>
            <person name="Huizar L."/>
            <person name="Hunter J.L."/>
            <person name="Jenkins J."/>
            <person name="Johnson-Hopson C."/>
            <person name="Khan S."/>
            <person name="Khaykin E."/>
            <person name="Kim C.J."/>
            <person name="Koo H.L."/>
            <person name="Kremenetskaia I."/>
            <person name="Kurtz D.B."/>
            <person name="Kwan A."/>
            <person name="Lam B."/>
            <person name="Langin-Hooper S."/>
            <person name="Lee A."/>
            <person name="Lee J.M."/>
            <person name="Lenz C.A."/>
            <person name="Li J.H."/>
            <person name="Li Y.-P."/>
            <person name="Lin X."/>
            <person name="Liu S.X."/>
            <person name="Liu Z.A."/>
            <person name="Luros J.S."/>
            <person name="Maiti R."/>
            <person name="Marziali A."/>
            <person name="Militscher J."/>
            <person name="Miranda M."/>
            <person name="Nguyen M."/>
            <person name="Nierman W.C."/>
            <person name="Osborne B.I."/>
            <person name="Pai G."/>
            <person name="Peterson J."/>
            <person name="Pham P.K."/>
            <person name="Rizzo M."/>
            <person name="Rooney T."/>
            <person name="Rowley D."/>
            <person name="Sakano H."/>
            <person name="Salzberg S.L."/>
            <person name="Schwartz J.R."/>
            <person name="Shinn P."/>
            <person name="Southwick A.M."/>
            <person name="Sun H."/>
            <person name="Tallon L.J."/>
            <person name="Tambunga G."/>
            <person name="Toriumi M.J."/>
            <person name="Town C.D."/>
            <person name="Utterback T."/>
            <person name="Van Aken S."/>
            <person name="Vaysberg M."/>
            <person name="Vysotskaia V.S."/>
            <person name="Walker M."/>
            <person name="Wu D."/>
            <person name="Yu G."/>
            <person name="Fraser C.M."/>
            <person name="Venter J.C."/>
            <person name="Davis R.W."/>
        </authorList>
    </citation>
    <scope>NUCLEOTIDE SEQUENCE [LARGE SCALE GENOMIC DNA]</scope>
    <source>
        <strain>cv. Columbia</strain>
    </source>
</reference>
<reference key="2">
    <citation type="journal article" date="2017" name="Plant J.">
        <title>Araport11: a complete reannotation of the Arabidopsis thaliana reference genome.</title>
        <authorList>
            <person name="Cheng C.Y."/>
            <person name="Krishnakumar V."/>
            <person name="Chan A.P."/>
            <person name="Thibaud-Nissen F."/>
            <person name="Schobel S."/>
            <person name="Town C.D."/>
        </authorList>
    </citation>
    <scope>GENOME REANNOTATION</scope>
    <source>
        <strain>cv. Columbia</strain>
    </source>
</reference>
<reference key="3">
    <citation type="submission" date="2006-12" db="EMBL/GenBank/DDBJ databases">
        <title>Arabidopsis ORF clones.</title>
        <authorList>
            <person name="Bautista V.R."/>
            <person name="Kim C.J."/>
            <person name="Chen H."/>
            <person name="Quinitio C."/>
            <person name="Ecker J.R."/>
        </authorList>
    </citation>
    <scope>NUCLEOTIDE SEQUENCE [LARGE SCALE MRNA]</scope>
    <source>
        <strain>cv. Columbia</strain>
    </source>
</reference>
<reference key="4">
    <citation type="journal article" date="2016" name="J. Biol. Chem.">
        <title>Identification of the plant ribokinase and discovery of a role for Arabidopsis ribokinase in nucleoside metabolism.</title>
        <authorList>
            <person name="Riggs J.W."/>
            <person name="Rockwell N.C."/>
            <person name="Cavales P.C."/>
            <person name="Callis J."/>
        </authorList>
    </citation>
    <scope>FUNCTION</scope>
    <scope>DISRUPTION PHENOTYPE</scope>
    <scope>MUTAGENESIS OF 1-MET--VAL-74</scope>
    <scope>CATALYTIC ACTIVITY</scope>
    <scope>SUBCELLULAR LOCATION</scope>
    <scope>BIOPHYSICOCHEMICAL PROPERTIES</scope>
    <scope>ACTIVITY REGULATION</scope>
    <source>
        <strain>cv. Columbia</strain>
    </source>
</reference>
<name>RBSK_ARATH</name>
<evidence type="ECO:0000255" key="1">
    <source>
        <dbReference type="HAMAP-Rule" id="MF_03215"/>
    </source>
</evidence>
<evidence type="ECO:0000269" key="2">
    <source>
    </source>
</evidence>
<evidence type="ECO:0000303" key="3">
    <source>
    </source>
</evidence>
<evidence type="ECO:0000305" key="4"/>
<evidence type="ECO:0000305" key="5">
    <source>
    </source>
</evidence>
<evidence type="ECO:0000312" key="6">
    <source>
        <dbReference type="Araport" id="AT1G17160"/>
    </source>
</evidence>
<evidence type="ECO:0000312" key="7">
    <source>
        <dbReference type="EMBL" id="AAD50017.1"/>
    </source>
</evidence>
<evidence type="ECO:0007829" key="8">
    <source>
        <dbReference type="PDB" id="6ILR"/>
    </source>
</evidence>
<evidence type="ECO:0007829" key="9">
    <source>
        <dbReference type="PDB" id="6ILS"/>
    </source>
</evidence>
<dbReference type="EC" id="2.7.1.15" evidence="1 2"/>
<dbReference type="EMBL" id="AC007651">
    <property type="protein sequence ID" value="AAD50017.1"/>
    <property type="status" value="ALT_INIT"/>
    <property type="molecule type" value="Genomic_DNA"/>
</dbReference>
<dbReference type="EMBL" id="CP002684">
    <property type="protein sequence ID" value="AEE29552.1"/>
    <property type="molecule type" value="Genomic_DNA"/>
</dbReference>
<dbReference type="EMBL" id="BT029492">
    <property type="protein sequence ID" value="ABL66749.1"/>
    <property type="molecule type" value="mRNA"/>
</dbReference>
<dbReference type="PIR" id="F86307">
    <property type="entry name" value="F86307"/>
</dbReference>
<dbReference type="RefSeq" id="NP_173159.1">
    <property type="nucleotide sequence ID" value="NM_101577.5"/>
</dbReference>
<dbReference type="PDB" id="6ILR">
    <property type="method" value="X-ray"/>
    <property type="resolution" value="1.97 A"/>
    <property type="chains" value="A/B=68-379"/>
</dbReference>
<dbReference type="PDB" id="6ILS">
    <property type="method" value="X-ray"/>
    <property type="resolution" value="1.80 A"/>
    <property type="chains" value="A/B=68-379"/>
</dbReference>
<dbReference type="PDB" id="6ILT">
    <property type="method" value="X-ray"/>
    <property type="resolution" value="2.20 A"/>
    <property type="chains" value="A/B=68-379"/>
</dbReference>
<dbReference type="PDBsum" id="6ILR"/>
<dbReference type="PDBsum" id="6ILS"/>
<dbReference type="PDBsum" id="6ILT"/>
<dbReference type="SMR" id="A1A6H3"/>
<dbReference type="FunCoup" id="A1A6H3">
    <property type="interactions" value="2757"/>
</dbReference>
<dbReference type="STRING" id="3702.A1A6H3"/>
<dbReference type="PaxDb" id="3702-AT1G17160.1"/>
<dbReference type="ProteomicsDB" id="181456"/>
<dbReference type="EnsemblPlants" id="AT1G17160.1">
    <property type="protein sequence ID" value="AT1G17160.1"/>
    <property type="gene ID" value="AT1G17160"/>
</dbReference>
<dbReference type="GeneID" id="838287"/>
<dbReference type="Gramene" id="AT1G17160.1">
    <property type="protein sequence ID" value="AT1G17160.1"/>
    <property type="gene ID" value="AT1G17160"/>
</dbReference>
<dbReference type="KEGG" id="ath:AT1G17160"/>
<dbReference type="Araport" id="AT1G17160"/>
<dbReference type="TAIR" id="AT1G17160">
    <property type="gene designation" value="RBSK"/>
</dbReference>
<dbReference type="eggNOG" id="KOG2855">
    <property type="taxonomic scope" value="Eukaryota"/>
</dbReference>
<dbReference type="HOGENOM" id="CLU_027634_2_2_1"/>
<dbReference type="InParanoid" id="A1A6H3"/>
<dbReference type="OMA" id="DIVLIQQ"/>
<dbReference type="PhylomeDB" id="A1A6H3"/>
<dbReference type="BioCyc" id="ARA:AT1G17160-MONOMER"/>
<dbReference type="BioCyc" id="MetaCyc:AT1G17160-MONOMER"/>
<dbReference type="BRENDA" id="2.7.1.15">
    <property type="organism ID" value="399"/>
</dbReference>
<dbReference type="UniPathway" id="UPA00916">
    <property type="reaction ID" value="UER00889"/>
</dbReference>
<dbReference type="PRO" id="PR:A1A6H3"/>
<dbReference type="Proteomes" id="UP000006548">
    <property type="component" value="Chromosome 1"/>
</dbReference>
<dbReference type="ExpressionAtlas" id="A1A6H3">
    <property type="expression patterns" value="baseline and differential"/>
</dbReference>
<dbReference type="GO" id="GO:0009507">
    <property type="term" value="C:chloroplast"/>
    <property type="evidence" value="ECO:0007005"/>
    <property type="project" value="TAIR"/>
</dbReference>
<dbReference type="GO" id="GO:0042644">
    <property type="term" value="C:chloroplast nucleoid"/>
    <property type="evidence" value="ECO:0007669"/>
    <property type="project" value="UniProtKB-SubCell"/>
</dbReference>
<dbReference type="GO" id="GO:0009570">
    <property type="term" value="C:chloroplast stroma"/>
    <property type="evidence" value="ECO:0007005"/>
    <property type="project" value="TAIR"/>
</dbReference>
<dbReference type="GO" id="GO:0005634">
    <property type="term" value="C:nucleus"/>
    <property type="evidence" value="ECO:0007669"/>
    <property type="project" value="UniProtKB-UniRule"/>
</dbReference>
<dbReference type="GO" id="GO:0042646">
    <property type="term" value="C:plastid nucleoid"/>
    <property type="evidence" value="ECO:0000314"/>
    <property type="project" value="TAIR"/>
</dbReference>
<dbReference type="GO" id="GO:0005524">
    <property type="term" value="F:ATP binding"/>
    <property type="evidence" value="ECO:0007669"/>
    <property type="project" value="UniProtKB-UniRule"/>
</dbReference>
<dbReference type="GO" id="GO:0046872">
    <property type="term" value="F:metal ion binding"/>
    <property type="evidence" value="ECO:0007669"/>
    <property type="project" value="UniProtKB-KW"/>
</dbReference>
<dbReference type="GO" id="GO:0004747">
    <property type="term" value="F:ribokinase activity"/>
    <property type="evidence" value="ECO:0000314"/>
    <property type="project" value="TAIR"/>
</dbReference>
<dbReference type="GO" id="GO:0019303">
    <property type="term" value="P:D-ribose catabolic process"/>
    <property type="evidence" value="ECO:0007669"/>
    <property type="project" value="UniProtKB-UniRule"/>
</dbReference>
<dbReference type="GO" id="GO:0009116">
    <property type="term" value="P:nucleoside metabolic process"/>
    <property type="evidence" value="ECO:0000316"/>
    <property type="project" value="TAIR"/>
</dbReference>
<dbReference type="CDD" id="cd01174">
    <property type="entry name" value="ribokinase"/>
    <property type="match status" value="1"/>
</dbReference>
<dbReference type="FunFam" id="3.40.1190.20:FF:000029">
    <property type="entry name" value="Ribokinase"/>
    <property type="match status" value="1"/>
</dbReference>
<dbReference type="Gene3D" id="3.40.1190.20">
    <property type="match status" value="1"/>
</dbReference>
<dbReference type="HAMAP" id="MF_01987">
    <property type="entry name" value="Ribokinase"/>
    <property type="match status" value="1"/>
</dbReference>
<dbReference type="InterPro" id="IPR002173">
    <property type="entry name" value="Carboh/pur_kinase_PfkB_CS"/>
</dbReference>
<dbReference type="InterPro" id="IPR011611">
    <property type="entry name" value="PfkB_dom"/>
</dbReference>
<dbReference type="InterPro" id="IPR002139">
    <property type="entry name" value="Ribo/fructo_kinase"/>
</dbReference>
<dbReference type="InterPro" id="IPR011877">
    <property type="entry name" value="Ribokinase"/>
</dbReference>
<dbReference type="InterPro" id="IPR029056">
    <property type="entry name" value="Ribokinase-like"/>
</dbReference>
<dbReference type="PANTHER" id="PTHR10584:SF166">
    <property type="entry name" value="RIBOKINASE"/>
    <property type="match status" value="1"/>
</dbReference>
<dbReference type="PANTHER" id="PTHR10584">
    <property type="entry name" value="SUGAR KINASE"/>
    <property type="match status" value="1"/>
</dbReference>
<dbReference type="Pfam" id="PF00294">
    <property type="entry name" value="PfkB"/>
    <property type="match status" value="1"/>
</dbReference>
<dbReference type="PRINTS" id="PR00990">
    <property type="entry name" value="RIBOKINASE"/>
</dbReference>
<dbReference type="SUPFAM" id="SSF53613">
    <property type="entry name" value="Ribokinase-like"/>
    <property type="match status" value="1"/>
</dbReference>
<dbReference type="PROSITE" id="PS00584">
    <property type="entry name" value="PFKB_KINASES_2"/>
    <property type="match status" value="1"/>
</dbReference>
<comment type="function">
    <text evidence="1 2">Catalyzes the phosphorylation of ribose at O-5 in a reaction requiring ATP and magnesium. The resulting D-ribose-5-phosphate can then be used either for sythesis of nucleotides, histidine, and tryptophan, or as a component of the pentose phosphate pathway (By similarity) (PubMed:27601466). Can also use xylose and fructose as carbohydrate substrates with a low efficiency (PubMed:27601466). Can use GTP, and, to a lower extent, CTP and UTP as alternative phosphoryl donors (PubMed:27601466).</text>
</comment>
<comment type="catalytic activity">
    <reaction evidence="1 2">
        <text>D-ribose + ATP = D-ribose 5-phosphate + ADP + H(+)</text>
        <dbReference type="Rhea" id="RHEA:13697"/>
        <dbReference type="ChEBI" id="CHEBI:15378"/>
        <dbReference type="ChEBI" id="CHEBI:30616"/>
        <dbReference type="ChEBI" id="CHEBI:47013"/>
        <dbReference type="ChEBI" id="CHEBI:78346"/>
        <dbReference type="ChEBI" id="CHEBI:456216"/>
        <dbReference type="EC" id="2.7.1.15"/>
    </reaction>
</comment>
<comment type="cofactor">
    <cofactor evidence="1">
        <name>Mg(2+)</name>
        <dbReference type="ChEBI" id="CHEBI:18420"/>
    </cofactor>
    <text evidence="1">Requires a divalent cation, most likely magnesium in vivo, as an electrophilic catalyst to aid phosphoryl group transfer. It is the chelate of the metal and the nucleotide that is the actual substrate.</text>
</comment>
<comment type="activity regulation">
    <text evidence="1 2">Activated by a monovalent cation that binds near, but not in, the active site. The most likely occupant of the site in vivo is potassium. Ion binding induces a conformational change that may alter substrate affinity (By similarity) (PubMed:27601466). Repressed by calcium, rubidium and sodium (PubMed:27601466). Substrate inhibition is observed in the presence of high ATP concentration (Ki=2.44 mM) (PubMed:27601466).</text>
</comment>
<comment type="biophysicochemical properties">
    <kinetics>
        <KM evidence="2">150 uM for D-ribose</KM>
        <KM evidence="2">45 uM for ATP</KM>
        <text evidence="2">kcat is 2 sec(-1).</text>
    </kinetics>
</comment>
<comment type="pathway">
    <text evidence="1">Carbohydrate metabolism; D-ribose degradation; D-ribose 5-phosphate from beta-D-ribopyranose: step 2/2.</text>
</comment>
<comment type="subunit">
    <text evidence="1">Homodimer.</text>
</comment>
<comment type="subcellular location">
    <subcellularLocation>
        <location evidence="2">Plastid</location>
        <location evidence="2">Chloroplast stroma</location>
        <location evidence="2">Chloroplast nucleoid</location>
    </subcellularLocation>
</comment>
<comment type="disruption phenotype">
    <text evidence="2">Abnormal accumulation of D-ribose. D-ribose hypersensitivity; normal growth except in the presence of D-ribose, which leads to chlorosis and growth inhibition.</text>
</comment>
<comment type="similarity">
    <text evidence="1">Belongs to the carbohydrate kinase PfkB family. Ribokinase subfamily.</text>
</comment>
<comment type="caution">
    <text evidence="5">Cleavage site of the transit peptide is likely localized before the predicted cleavage site at Val-74, probably around His-67.</text>
</comment>
<comment type="sequence caution" evidence="4">
    <conflict type="erroneous initiation">
        <sequence resource="EMBL-CDS" id="AAD50017"/>
    </conflict>
    <text>Truncated N-terminus.</text>
</comment>
<organism>
    <name type="scientific">Arabidopsis thaliana</name>
    <name type="common">Mouse-ear cress</name>
    <dbReference type="NCBI Taxonomy" id="3702"/>
    <lineage>
        <taxon>Eukaryota</taxon>
        <taxon>Viridiplantae</taxon>
        <taxon>Streptophyta</taxon>
        <taxon>Embryophyta</taxon>
        <taxon>Tracheophyta</taxon>
        <taxon>Spermatophyta</taxon>
        <taxon>Magnoliopsida</taxon>
        <taxon>eudicotyledons</taxon>
        <taxon>Gunneridae</taxon>
        <taxon>Pentapetalae</taxon>
        <taxon>rosids</taxon>
        <taxon>malvids</taxon>
        <taxon>Brassicales</taxon>
        <taxon>Brassicaceae</taxon>
        <taxon>Camelineae</taxon>
        <taxon>Arabidopsis</taxon>
    </lineage>
</organism>
<gene>
    <name evidence="3" type="primary">RBSK</name>
    <name evidence="6" type="ordered locus">At1g17160</name>
    <name evidence="7" type="ORF">F20D23.14</name>
</gene>
<proteinExistence type="evidence at protein level"/>
<sequence>MMKGISSVSQSINYNPYIEFNRPQLQISTVNPNPAQSRFSRPRSLRVLSLSADPSANRNPKSAVDAHAPPLVVVGSANADIYVEIERLPKEGETISAKTGQTLAGGKGANQAACGAKLMYPTYFVGRLGEDAHGKLIAEALGDDGCGVHLDYVRSVNNEPTGHAVVMLQSDGQNSIIIVGGANMKAWPEIMSDDDLEIVRNAGIVLLQREIPDSINIQVAKAVKKAGVPVILDVGGMDTPIPNELLDSIDILSPNETELSRLTGMPTETFEQISQAVAKCHKLGVKQVLVKLGSKGSALFIQGEKPIQQSIIPAAQVVDTTGAGDTFTAAFAVAMVEGKSHEECLRFAAAAASLCVQVKGAIPSMPDRKSVLKLLKFSI</sequence>
<feature type="transit peptide" description="Chloroplast" evidence="5">
    <location>
        <begin position="1"/>
        <end status="unknown"/>
    </location>
</feature>
<feature type="chain" id="PRO_0000446983" description="Ribokinase">
    <location>
        <begin status="unknown"/>
        <end position="379"/>
    </location>
</feature>
<feature type="active site" description="Proton acceptor" evidence="1">
    <location>
        <position position="325"/>
    </location>
</feature>
<feature type="binding site" evidence="1">
    <location>
        <begin position="78"/>
        <end position="80"/>
    </location>
    <ligand>
        <name>substrate</name>
    </ligand>
</feature>
<feature type="binding site" evidence="1">
    <location>
        <begin position="106"/>
        <end position="110"/>
    </location>
    <ligand>
        <name>substrate</name>
    </ligand>
</feature>
<feature type="binding site" evidence="1">
    <location>
        <position position="210"/>
    </location>
    <ligand>
        <name>substrate</name>
    </ligand>
</feature>
<feature type="binding site" evidence="1">
    <location>
        <position position="255"/>
    </location>
    <ligand>
        <name>ATP</name>
        <dbReference type="ChEBI" id="CHEBI:30616"/>
    </ligand>
</feature>
<feature type="binding site" evidence="1">
    <location>
        <begin position="291"/>
        <end position="296"/>
    </location>
    <ligand>
        <name>ATP</name>
        <dbReference type="ChEBI" id="CHEBI:30616"/>
    </ligand>
</feature>
<feature type="binding site" evidence="1">
    <location>
        <position position="319"/>
    </location>
    <ligand>
        <name>K(+)</name>
        <dbReference type="ChEBI" id="CHEBI:29103"/>
    </ligand>
</feature>
<feature type="binding site" evidence="1">
    <location>
        <position position="321"/>
    </location>
    <ligand>
        <name>K(+)</name>
        <dbReference type="ChEBI" id="CHEBI:29103"/>
    </ligand>
</feature>
<feature type="binding site" evidence="1">
    <location>
        <begin position="324"/>
        <end position="325"/>
    </location>
    <ligand>
        <name>ATP</name>
        <dbReference type="ChEBI" id="CHEBI:30616"/>
    </ligand>
</feature>
<feature type="binding site" evidence="1">
    <location>
        <position position="325"/>
    </location>
    <ligand>
        <name>substrate</name>
    </ligand>
</feature>
<feature type="binding site" evidence="1">
    <location>
        <position position="355"/>
    </location>
    <ligand>
        <name>K(+)</name>
        <dbReference type="ChEBI" id="CHEBI:29103"/>
    </ligand>
</feature>
<feature type="binding site" evidence="1">
    <location>
        <position position="358"/>
    </location>
    <ligand>
        <name>K(+)</name>
        <dbReference type="ChEBI" id="CHEBI:29103"/>
    </ligand>
</feature>
<feature type="binding site" evidence="1">
    <location>
        <position position="360"/>
    </location>
    <ligand>
        <name>K(+)</name>
        <dbReference type="ChEBI" id="CHEBI:29103"/>
    </ligand>
</feature>
<feature type="binding site" evidence="1">
    <location>
        <position position="364"/>
    </location>
    <ligand>
        <name>K(+)</name>
        <dbReference type="ChEBI" id="CHEBI:29103"/>
    </ligand>
</feature>
<feature type="mutagenesis site" description="Loss of ribokinase activity." evidence="2">
    <location>
        <begin position="1"/>
        <end position="74"/>
    </location>
</feature>
<feature type="strand" evidence="9">
    <location>
        <begin position="71"/>
        <end position="74"/>
    </location>
</feature>
<feature type="strand" evidence="9">
    <location>
        <begin position="78"/>
        <end position="87"/>
    </location>
</feature>
<feature type="strand" evidence="9">
    <location>
        <begin position="94"/>
        <end position="96"/>
    </location>
</feature>
<feature type="strand" evidence="9">
    <location>
        <begin position="98"/>
        <end position="105"/>
    </location>
</feature>
<feature type="helix" evidence="9">
    <location>
        <begin position="107"/>
        <end position="117"/>
    </location>
</feature>
<feature type="strand" evidence="9">
    <location>
        <begin position="122"/>
        <end position="125"/>
    </location>
</feature>
<feature type="strand" evidence="9">
    <location>
        <begin position="127"/>
        <end position="131"/>
    </location>
</feature>
<feature type="helix" evidence="9">
    <location>
        <begin position="132"/>
        <end position="141"/>
    </location>
</feature>
<feature type="turn" evidence="9">
    <location>
        <begin position="143"/>
        <end position="146"/>
    </location>
</feature>
<feature type="strand" evidence="9">
    <location>
        <begin position="154"/>
        <end position="159"/>
    </location>
</feature>
<feature type="strand" evidence="9">
    <location>
        <begin position="162"/>
        <end position="169"/>
    </location>
</feature>
<feature type="strand" evidence="8">
    <location>
        <begin position="170"/>
        <end position="172"/>
    </location>
</feature>
<feature type="strand" evidence="9">
    <location>
        <begin position="174"/>
        <end position="179"/>
    </location>
</feature>
<feature type="helix" evidence="9">
    <location>
        <begin position="182"/>
        <end position="185"/>
    </location>
</feature>
<feature type="helix" evidence="9">
    <location>
        <begin position="193"/>
        <end position="200"/>
    </location>
</feature>
<feature type="strand" evidence="9">
    <location>
        <begin position="203"/>
        <end position="211"/>
    </location>
</feature>
<feature type="helix" evidence="9">
    <location>
        <begin position="213"/>
        <end position="226"/>
    </location>
</feature>
<feature type="strand" evidence="9">
    <location>
        <begin position="230"/>
        <end position="236"/>
    </location>
</feature>
<feature type="helix" evidence="9">
    <location>
        <begin position="243"/>
        <end position="246"/>
    </location>
</feature>
<feature type="strand" evidence="9">
    <location>
        <begin position="250"/>
        <end position="253"/>
    </location>
</feature>
<feature type="helix" evidence="9">
    <location>
        <begin position="256"/>
        <end position="263"/>
    </location>
</feature>
<feature type="helix" evidence="9">
    <location>
        <begin position="270"/>
        <end position="283"/>
    </location>
</feature>
<feature type="strand" evidence="9">
    <location>
        <begin position="286"/>
        <end position="291"/>
    </location>
</feature>
<feature type="helix" evidence="9">
    <location>
        <begin position="293"/>
        <end position="295"/>
    </location>
</feature>
<feature type="strand" evidence="9">
    <location>
        <begin position="297"/>
        <end position="301"/>
    </location>
</feature>
<feature type="strand" evidence="9">
    <location>
        <begin position="307"/>
        <end position="309"/>
    </location>
</feature>
<feature type="helix" evidence="9">
    <location>
        <begin position="323"/>
        <end position="336"/>
    </location>
</feature>
<feature type="helix" evidence="9">
    <location>
        <begin position="341"/>
        <end position="356"/>
    </location>
</feature>
<feature type="strand" evidence="9">
    <location>
        <begin position="358"/>
        <end position="361"/>
    </location>
</feature>
<feature type="helix" evidence="9">
    <location>
        <begin position="362"/>
        <end position="364"/>
    </location>
</feature>
<feature type="helix" evidence="9">
    <location>
        <begin position="368"/>
        <end position="376"/>
    </location>
</feature>